<proteinExistence type="inferred from homology"/>
<dbReference type="EC" id="2.5.1.n9" evidence="1"/>
<dbReference type="EMBL" id="CP001175">
    <property type="protein sequence ID" value="ACK39156.1"/>
    <property type="molecule type" value="Genomic_DNA"/>
</dbReference>
<dbReference type="RefSeq" id="WP_003729807.1">
    <property type="nucleotide sequence ID" value="NC_011660.1"/>
</dbReference>
<dbReference type="SMR" id="B8DFG3"/>
<dbReference type="KEGG" id="lmh:LMHCC_0804"/>
<dbReference type="HOGENOM" id="CLU_095211_0_0_9"/>
<dbReference type="UniPathway" id="UPA00940"/>
<dbReference type="GO" id="GO:0120536">
    <property type="term" value="F:heptaprenylglyceryl phosphate synthase activity"/>
    <property type="evidence" value="ECO:0007669"/>
    <property type="project" value="RHEA"/>
</dbReference>
<dbReference type="GO" id="GO:0000287">
    <property type="term" value="F:magnesium ion binding"/>
    <property type="evidence" value="ECO:0007669"/>
    <property type="project" value="UniProtKB-UniRule"/>
</dbReference>
<dbReference type="GO" id="GO:0046474">
    <property type="term" value="P:glycerophospholipid biosynthetic process"/>
    <property type="evidence" value="ECO:0007669"/>
    <property type="project" value="UniProtKB-UniRule"/>
</dbReference>
<dbReference type="CDD" id="cd02812">
    <property type="entry name" value="PcrB_like"/>
    <property type="match status" value="1"/>
</dbReference>
<dbReference type="FunFam" id="3.20.20.390:FF:000001">
    <property type="entry name" value="Heptaprenylglyceryl phosphate synthase"/>
    <property type="match status" value="1"/>
</dbReference>
<dbReference type="Gene3D" id="3.20.20.390">
    <property type="entry name" value="FMN-linked oxidoreductases"/>
    <property type="match status" value="1"/>
</dbReference>
<dbReference type="HAMAP" id="MF_00112">
    <property type="entry name" value="GGGP_HepGP_synthase"/>
    <property type="match status" value="1"/>
</dbReference>
<dbReference type="InterPro" id="IPR039074">
    <property type="entry name" value="GGGP/HepGP_synthase_I"/>
</dbReference>
<dbReference type="InterPro" id="IPR038597">
    <property type="entry name" value="GGGP/HepGP_synthase_sf"/>
</dbReference>
<dbReference type="InterPro" id="IPR008205">
    <property type="entry name" value="GGGP_HepGP_synthase"/>
</dbReference>
<dbReference type="NCBIfam" id="TIGR01768">
    <property type="entry name" value="GGGP-family"/>
    <property type="match status" value="1"/>
</dbReference>
<dbReference type="NCBIfam" id="NF003199">
    <property type="entry name" value="PRK04169.1-3"/>
    <property type="match status" value="1"/>
</dbReference>
<dbReference type="PANTHER" id="PTHR40029">
    <property type="match status" value="1"/>
</dbReference>
<dbReference type="PANTHER" id="PTHR40029:SF2">
    <property type="entry name" value="HEPTAPRENYLGLYCERYL PHOSPHATE SYNTHASE"/>
    <property type="match status" value="1"/>
</dbReference>
<dbReference type="Pfam" id="PF01884">
    <property type="entry name" value="PcrB"/>
    <property type="match status" value="1"/>
</dbReference>
<dbReference type="SUPFAM" id="SSF51395">
    <property type="entry name" value="FMN-linked oxidoreductases"/>
    <property type="match status" value="1"/>
</dbReference>
<comment type="function">
    <text evidence="1">Prenyltransferase that catalyzes in vivo the transfer of the heptaprenyl moiety of heptaprenyl pyrophosphate (HepPP; 35 carbon atoms) to the C3 hydroxyl of sn-glycerol-1-phosphate (G1P), producing heptaprenylglyceryl phosphate (HepGP). This reaction is an ether-bond-formation step in the biosynthesis of archaea-type G1P-based membrane lipids found in Bacillales.</text>
</comment>
<comment type="catalytic activity">
    <reaction evidence="1">
        <text>sn-glycerol 1-phosphate + all-trans-heptaprenyl diphosphate = 3-heptaprenyl-sn-glycero-1-phosphate + diphosphate</text>
        <dbReference type="Rhea" id="RHEA:33495"/>
        <dbReference type="ChEBI" id="CHEBI:33019"/>
        <dbReference type="ChEBI" id="CHEBI:57685"/>
        <dbReference type="ChEBI" id="CHEBI:58206"/>
        <dbReference type="ChEBI" id="CHEBI:64781"/>
        <dbReference type="EC" id="2.5.1.n9"/>
    </reaction>
</comment>
<comment type="cofactor">
    <cofactor evidence="1">
        <name>Mg(2+)</name>
        <dbReference type="ChEBI" id="CHEBI:18420"/>
    </cofactor>
</comment>
<comment type="pathway">
    <text evidence="1">Membrane lipid metabolism; glycerophospholipid metabolism.</text>
</comment>
<comment type="subunit">
    <text evidence="1">Homodimer.</text>
</comment>
<comment type="similarity">
    <text evidence="1">Belongs to the GGGP/HepGP synthase family. Group I subfamily.</text>
</comment>
<sequence length="225" mass="25258">MKHLFKLDPAKNLPMNDLTKLVHSGTDGFIIGGTDNVQIEAVQKLYELLGETDLPIFLEISNESMILPEADHFLIPVVLNTENSKWTHGLHQELIKEMGAFIPWKRVTAEGYVILNKDAKVAHLTEAKTDLTDEDIVAYARLAENIFHLPIFYVEYSGMYGDPEVVRKAGAALSNTKFWYGGGIRSKEQAAEMAKYADTIIVGNIIYEDLEKALETATIFRKKTV</sequence>
<feature type="chain" id="PRO_1000119132" description="Heptaprenylglyceryl phosphate synthase">
    <location>
        <begin position="1"/>
        <end position="225"/>
    </location>
</feature>
<feature type="binding site" evidence="1">
    <location>
        <position position="6"/>
    </location>
    <ligand>
        <name>sn-glycerol 1-phosphate</name>
        <dbReference type="ChEBI" id="CHEBI:57685"/>
    </ligand>
</feature>
<feature type="binding site" evidence="1">
    <location>
        <position position="8"/>
    </location>
    <ligand>
        <name>Mg(2+)</name>
        <dbReference type="ChEBI" id="CHEBI:18420"/>
    </ligand>
</feature>
<feature type="binding site" evidence="1">
    <location>
        <position position="34"/>
    </location>
    <ligand>
        <name>Mg(2+)</name>
        <dbReference type="ChEBI" id="CHEBI:18420"/>
    </ligand>
</feature>
<feature type="binding site" evidence="1">
    <location>
        <begin position="153"/>
        <end position="158"/>
    </location>
    <ligand>
        <name>sn-glycerol 1-phosphate</name>
        <dbReference type="ChEBI" id="CHEBI:57685"/>
    </ligand>
</feature>
<feature type="binding site" evidence="1">
    <location>
        <position position="183"/>
    </location>
    <ligand>
        <name>sn-glycerol 1-phosphate</name>
        <dbReference type="ChEBI" id="CHEBI:57685"/>
    </ligand>
</feature>
<feature type="binding site" evidence="1">
    <location>
        <begin position="203"/>
        <end position="204"/>
    </location>
    <ligand>
        <name>sn-glycerol 1-phosphate</name>
        <dbReference type="ChEBI" id="CHEBI:57685"/>
    </ligand>
</feature>
<protein>
    <recommendedName>
        <fullName evidence="1">Heptaprenylglyceryl phosphate synthase</fullName>
        <shortName evidence="1">HepGP synthase</shortName>
        <ecNumber evidence="1">2.5.1.n9</ecNumber>
    </recommendedName>
    <alternativeName>
        <fullName evidence="1">Glycerol-1-phosphate heptaprenyltransferase</fullName>
    </alternativeName>
</protein>
<keyword id="KW-0444">Lipid biosynthesis</keyword>
<keyword id="KW-0443">Lipid metabolism</keyword>
<keyword id="KW-0460">Magnesium</keyword>
<keyword id="KW-0479">Metal-binding</keyword>
<keyword id="KW-0594">Phospholipid biosynthesis</keyword>
<keyword id="KW-1208">Phospholipid metabolism</keyword>
<keyword id="KW-0808">Transferase</keyword>
<name>PCRB_LISMH</name>
<reference key="1">
    <citation type="journal article" date="2011" name="J. Bacteriol.">
        <title>Genome sequence of lineage III Listeria monocytogenes strain HCC23.</title>
        <authorList>
            <person name="Steele C.L."/>
            <person name="Donaldson J.R."/>
            <person name="Paul D."/>
            <person name="Banes M.M."/>
            <person name="Arick T."/>
            <person name="Bridges S.M."/>
            <person name="Lawrence M.L."/>
        </authorList>
    </citation>
    <scope>NUCLEOTIDE SEQUENCE [LARGE SCALE GENOMIC DNA]</scope>
    <source>
        <strain>HCC23</strain>
    </source>
</reference>
<gene>
    <name evidence="1" type="primary">pcrB</name>
    <name type="ordered locus">LMHCC_0804</name>
</gene>
<accession>B8DFG3</accession>
<organism>
    <name type="scientific">Listeria monocytogenes serotype 4a (strain HCC23)</name>
    <dbReference type="NCBI Taxonomy" id="552536"/>
    <lineage>
        <taxon>Bacteria</taxon>
        <taxon>Bacillati</taxon>
        <taxon>Bacillota</taxon>
        <taxon>Bacilli</taxon>
        <taxon>Bacillales</taxon>
        <taxon>Listeriaceae</taxon>
        <taxon>Listeria</taxon>
    </lineage>
</organism>
<evidence type="ECO:0000255" key="1">
    <source>
        <dbReference type="HAMAP-Rule" id="MF_00112"/>
    </source>
</evidence>